<accession>Q85FM4</accession>
<reference key="1">
    <citation type="journal article" date="2003" name="DNA Res.">
        <title>Complete nucleotide sequence of the chloroplast genome from a leptosporangiate fern, Adiantum capillus-veneris L.</title>
        <authorList>
            <person name="Wolf P.G."/>
            <person name="Rowe C.A."/>
            <person name="Sinclair R.B."/>
            <person name="Hasebe M."/>
        </authorList>
    </citation>
    <scope>NUCLEOTIDE SEQUENCE [LARGE SCALE GENOMIC DNA]</scope>
</reference>
<reference key="2">
    <citation type="journal article" date="2004" name="Gene">
        <title>High levels of RNA editing in a vascular plant chloroplast genome: analysis of transcripts from the fern Adiantum capillus-veneris.</title>
        <authorList>
            <person name="Wolf P.G."/>
            <person name="Rowe C.A."/>
            <person name="Hasebe M."/>
        </authorList>
    </citation>
    <scope>NUCLEOTIDE SEQUENCE [GENOMIC DNA]</scope>
    <scope>ABSENCE OF RNA EDITING</scope>
    <source>
        <tissue>Frond</tissue>
    </source>
</reference>
<dbReference type="EMBL" id="AY178864">
    <property type="protein sequence ID" value="AAP29387.1"/>
    <property type="molecule type" value="Genomic_DNA"/>
</dbReference>
<dbReference type="RefSeq" id="NP_848055.1">
    <property type="nucleotide sequence ID" value="NC_004766.1"/>
</dbReference>
<dbReference type="SMR" id="Q85FM4"/>
<dbReference type="GeneID" id="807386"/>
<dbReference type="GO" id="GO:0009535">
    <property type="term" value="C:chloroplast thylakoid membrane"/>
    <property type="evidence" value="ECO:0007669"/>
    <property type="project" value="UniProtKB-SubCell"/>
</dbReference>
<dbReference type="GO" id="GO:0009539">
    <property type="term" value="C:photosystem II reaction center"/>
    <property type="evidence" value="ECO:0007669"/>
    <property type="project" value="InterPro"/>
</dbReference>
<dbReference type="GO" id="GO:0015979">
    <property type="term" value="P:photosynthesis"/>
    <property type="evidence" value="ECO:0007669"/>
    <property type="project" value="UniProtKB-UniRule"/>
</dbReference>
<dbReference type="GO" id="GO:0042549">
    <property type="term" value="P:photosystem II stabilization"/>
    <property type="evidence" value="ECO:0007669"/>
    <property type="project" value="InterPro"/>
</dbReference>
<dbReference type="Gene3D" id="1.10.287.740">
    <property type="entry name" value="Photosystem II PsbZ, reaction centre"/>
    <property type="match status" value="1"/>
</dbReference>
<dbReference type="HAMAP" id="MF_00644">
    <property type="entry name" value="PSII_PsbZ"/>
    <property type="match status" value="1"/>
</dbReference>
<dbReference type="InterPro" id="IPR002644">
    <property type="entry name" value="PSII_PsbZ"/>
</dbReference>
<dbReference type="InterPro" id="IPR036512">
    <property type="entry name" value="PSII_PsbZ_sf"/>
</dbReference>
<dbReference type="NCBIfam" id="TIGR03043">
    <property type="entry name" value="PS_II_psbZ"/>
    <property type="match status" value="1"/>
</dbReference>
<dbReference type="PANTHER" id="PTHR34971">
    <property type="entry name" value="PHOTOSYSTEM II REACTION CENTER PROTEIN Z"/>
    <property type="match status" value="1"/>
</dbReference>
<dbReference type="PANTHER" id="PTHR34971:SF2">
    <property type="entry name" value="PHOTOSYSTEM II REACTION CENTER PROTEIN Z"/>
    <property type="match status" value="1"/>
</dbReference>
<dbReference type="Pfam" id="PF01737">
    <property type="entry name" value="Ycf9"/>
    <property type="match status" value="1"/>
</dbReference>
<dbReference type="SUPFAM" id="SSF161055">
    <property type="entry name" value="PsbZ-like"/>
    <property type="match status" value="1"/>
</dbReference>
<evidence type="ECO:0000255" key="1">
    <source>
        <dbReference type="HAMAP-Rule" id="MF_00644"/>
    </source>
</evidence>
<feature type="chain" id="PRO_0000217686" description="Photosystem II reaction center protein Z">
    <location>
        <begin position="1"/>
        <end position="62"/>
    </location>
</feature>
<feature type="transmembrane region" description="Helical" evidence="1">
    <location>
        <begin position="8"/>
        <end position="28"/>
    </location>
</feature>
<feature type="transmembrane region" description="Helical" evidence="1">
    <location>
        <begin position="41"/>
        <end position="61"/>
    </location>
</feature>
<geneLocation type="chloroplast"/>
<protein>
    <recommendedName>
        <fullName evidence="1">Photosystem II reaction center protein Z</fullName>
        <shortName evidence="1">PSII-Z</shortName>
    </recommendedName>
</protein>
<keyword id="KW-0150">Chloroplast</keyword>
<keyword id="KW-0472">Membrane</keyword>
<keyword id="KW-0602">Photosynthesis</keyword>
<keyword id="KW-0604">Photosystem II</keyword>
<keyword id="KW-0934">Plastid</keyword>
<keyword id="KW-0674">Reaction center</keyword>
<keyword id="KW-0793">Thylakoid</keyword>
<keyword id="KW-0812">Transmembrane</keyword>
<keyword id="KW-1133">Transmembrane helix</keyword>
<name>PSBZ_ADICA</name>
<proteinExistence type="evidence at transcript level"/>
<comment type="function">
    <text evidence="1">May control the interaction of photosystem II (PSII) cores with the light-harvesting antenna, regulates electron flow through the 2 photosystem reaction centers. PSII is a light-driven water plastoquinone oxidoreductase, using light energy to abstract electrons from H(2)O, generating a proton gradient subsequently used for ATP formation.</text>
</comment>
<comment type="subunit">
    <text evidence="1">PSII is composed of 1 copy each of membrane proteins PsbA, PsbB, PsbC, PsbD, PsbE, PsbF, PsbH, PsbI, PsbJ, PsbK, PsbL, PsbM, PsbT, PsbY, PsbZ, Psb30/Ycf12, at least 3 peripheral proteins of the oxygen-evolving complex and a large number of cofactors. It forms dimeric complexes.</text>
</comment>
<comment type="subcellular location">
    <subcellularLocation>
        <location evidence="1">Plastid</location>
        <location evidence="1">Chloroplast thylakoid membrane</location>
        <topology evidence="1">Multi-pass membrane protein</topology>
    </subcellularLocation>
</comment>
<comment type="similarity">
    <text evidence="1">Belongs to the PsbZ family.</text>
</comment>
<gene>
    <name evidence="1" type="primary">psbZ</name>
</gene>
<organism>
    <name type="scientific">Adiantum capillus-veneris</name>
    <name type="common">Maidenhair fern</name>
    <dbReference type="NCBI Taxonomy" id="13818"/>
    <lineage>
        <taxon>Eukaryota</taxon>
        <taxon>Viridiplantae</taxon>
        <taxon>Streptophyta</taxon>
        <taxon>Embryophyta</taxon>
        <taxon>Tracheophyta</taxon>
        <taxon>Polypodiopsida</taxon>
        <taxon>Polypodiidae</taxon>
        <taxon>Polypodiales</taxon>
        <taxon>Pteridineae</taxon>
        <taxon>Pteridaceae</taxon>
        <taxon>Vittarioideae</taxon>
        <taxon>Adiantum</taxon>
    </lineage>
</organism>
<sequence length="62" mass="6509">MTTAFQFALFALIATSFLLVVGVPVAFASPGGWSDNKNIVFSGASLWIGLVFLVGIPNSFIS</sequence>